<gene>
    <name evidence="6" type="primary">EIF4A3B</name>
    <name evidence="7" type="synonym">EIF4A3</name>
    <name evidence="6" type="synonym">RH34</name>
    <name evidence="10" type="ordered locus">Os03g0566800</name>
    <name evidence="9" type="ordered locus">LOC_Os03g36930</name>
    <name evidence="8" type="ORF">OSJNBa0026A15.3</name>
</gene>
<dbReference type="EC" id="3.6.4.13" evidence="7"/>
<dbReference type="EMBL" id="AC084404">
    <property type="protein sequence ID" value="AAK50586.1"/>
    <property type="molecule type" value="Genomic_DNA"/>
</dbReference>
<dbReference type="EMBL" id="DP000009">
    <property type="protein sequence ID" value="ABF97164.1"/>
    <property type="molecule type" value="Genomic_DNA"/>
</dbReference>
<dbReference type="EMBL" id="AP008209">
    <property type="protein sequence ID" value="BAF12420.1"/>
    <property type="molecule type" value="Genomic_DNA"/>
</dbReference>
<dbReference type="EMBL" id="AP014959">
    <property type="protein sequence ID" value="BAS84961.1"/>
    <property type="molecule type" value="Genomic_DNA"/>
</dbReference>
<dbReference type="EMBL" id="AK103270">
    <property type="status" value="NOT_ANNOTATED_CDS"/>
    <property type="molecule type" value="mRNA"/>
</dbReference>
<dbReference type="RefSeq" id="XP_015633220.1">
    <property type="nucleotide sequence ID" value="XM_015777734.1"/>
</dbReference>
<dbReference type="SMR" id="Q10I26"/>
<dbReference type="FunCoup" id="Q10I26">
    <property type="interactions" value="2666"/>
</dbReference>
<dbReference type="STRING" id="39947.Q10I26"/>
<dbReference type="PaxDb" id="39947-Q10I26"/>
<dbReference type="EnsemblPlants" id="Os03t0566800-01">
    <property type="protein sequence ID" value="Os03t0566800-01"/>
    <property type="gene ID" value="Os03g0566800"/>
</dbReference>
<dbReference type="Gramene" id="Os03t0566800-01">
    <property type="protein sequence ID" value="Os03t0566800-01"/>
    <property type="gene ID" value="Os03g0566800"/>
</dbReference>
<dbReference type="KEGG" id="dosa:Os03g0566800"/>
<dbReference type="eggNOG" id="KOG0328">
    <property type="taxonomic scope" value="Eukaryota"/>
</dbReference>
<dbReference type="HOGENOM" id="CLU_003041_1_0_1"/>
<dbReference type="InParanoid" id="Q10I26"/>
<dbReference type="OMA" id="PENYMHR"/>
<dbReference type="OrthoDB" id="10265785at2759"/>
<dbReference type="Proteomes" id="UP000000763">
    <property type="component" value="Chromosome 3"/>
</dbReference>
<dbReference type="Proteomes" id="UP000059680">
    <property type="component" value="Chromosome 3"/>
</dbReference>
<dbReference type="GO" id="GO:0071013">
    <property type="term" value="C:catalytic step 2 spliceosome"/>
    <property type="evidence" value="ECO:0000318"/>
    <property type="project" value="GO_Central"/>
</dbReference>
<dbReference type="GO" id="GO:0005737">
    <property type="term" value="C:cytoplasm"/>
    <property type="evidence" value="ECO:0007669"/>
    <property type="project" value="UniProtKB-SubCell"/>
</dbReference>
<dbReference type="GO" id="GO:0005730">
    <property type="term" value="C:nucleolus"/>
    <property type="evidence" value="ECO:0000318"/>
    <property type="project" value="GO_Central"/>
</dbReference>
<dbReference type="GO" id="GO:0005524">
    <property type="term" value="F:ATP binding"/>
    <property type="evidence" value="ECO:0007669"/>
    <property type="project" value="UniProtKB-KW"/>
</dbReference>
<dbReference type="GO" id="GO:0016887">
    <property type="term" value="F:ATP hydrolysis activity"/>
    <property type="evidence" value="ECO:0007669"/>
    <property type="project" value="RHEA"/>
</dbReference>
<dbReference type="GO" id="GO:0003729">
    <property type="term" value="F:mRNA binding"/>
    <property type="evidence" value="ECO:0000318"/>
    <property type="project" value="GO_Central"/>
</dbReference>
<dbReference type="GO" id="GO:0003724">
    <property type="term" value="F:RNA helicase activity"/>
    <property type="evidence" value="ECO:0000318"/>
    <property type="project" value="GO_Central"/>
</dbReference>
<dbReference type="GO" id="GO:0000398">
    <property type="term" value="P:mRNA splicing, via spliceosome"/>
    <property type="evidence" value="ECO:0000318"/>
    <property type="project" value="GO_Central"/>
</dbReference>
<dbReference type="GO" id="GO:0051028">
    <property type="term" value="P:mRNA transport"/>
    <property type="evidence" value="ECO:0007669"/>
    <property type="project" value="UniProtKB-KW"/>
</dbReference>
<dbReference type="GO" id="GO:0000184">
    <property type="term" value="P:nuclear-transcribed mRNA catabolic process, nonsense-mediated decay"/>
    <property type="evidence" value="ECO:0007669"/>
    <property type="project" value="UniProtKB-KW"/>
</dbReference>
<dbReference type="GO" id="GO:0006417">
    <property type="term" value="P:regulation of translation"/>
    <property type="evidence" value="ECO:0007669"/>
    <property type="project" value="UniProtKB-KW"/>
</dbReference>
<dbReference type="CDD" id="cd18045">
    <property type="entry name" value="DEADc_EIF4AIII_DDX48"/>
    <property type="match status" value="1"/>
</dbReference>
<dbReference type="CDD" id="cd18787">
    <property type="entry name" value="SF2_C_DEAD"/>
    <property type="match status" value="1"/>
</dbReference>
<dbReference type="FunFam" id="3.40.50.300:FF:000031">
    <property type="entry name" value="Eukaryotic initiation factor 4A-III"/>
    <property type="match status" value="1"/>
</dbReference>
<dbReference type="FunFam" id="3.40.50.300:FF:000498">
    <property type="entry name" value="Eukaryotic initiation factor 4A-III"/>
    <property type="match status" value="1"/>
</dbReference>
<dbReference type="Gene3D" id="3.40.50.300">
    <property type="entry name" value="P-loop containing nucleotide triphosphate hydrolases"/>
    <property type="match status" value="2"/>
</dbReference>
<dbReference type="InterPro" id="IPR011545">
    <property type="entry name" value="DEAD/DEAH_box_helicase_dom"/>
</dbReference>
<dbReference type="InterPro" id="IPR014001">
    <property type="entry name" value="Helicase_ATP-bd"/>
</dbReference>
<dbReference type="InterPro" id="IPR001650">
    <property type="entry name" value="Helicase_C-like"/>
</dbReference>
<dbReference type="InterPro" id="IPR027417">
    <property type="entry name" value="P-loop_NTPase"/>
</dbReference>
<dbReference type="InterPro" id="IPR000629">
    <property type="entry name" value="RNA-helicase_DEAD-box_CS"/>
</dbReference>
<dbReference type="InterPro" id="IPR014014">
    <property type="entry name" value="RNA_helicase_DEAD_Q_motif"/>
</dbReference>
<dbReference type="PANTHER" id="PTHR47958">
    <property type="entry name" value="ATP-DEPENDENT RNA HELICASE DBP3"/>
    <property type="match status" value="1"/>
</dbReference>
<dbReference type="Pfam" id="PF00270">
    <property type="entry name" value="DEAD"/>
    <property type="match status" value="1"/>
</dbReference>
<dbReference type="Pfam" id="PF00271">
    <property type="entry name" value="Helicase_C"/>
    <property type="match status" value="1"/>
</dbReference>
<dbReference type="SMART" id="SM00487">
    <property type="entry name" value="DEXDc"/>
    <property type="match status" value="1"/>
</dbReference>
<dbReference type="SMART" id="SM00490">
    <property type="entry name" value="HELICc"/>
    <property type="match status" value="1"/>
</dbReference>
<dbReference type="SUPFAM" id="SSF52540">
    <property type="entry name" value="P-loop containing nucleoside triphosphate hydrolases"/>
    <property type="match status" value="2"/>
</dbReference>
<dbReference type="PROSITE" id="PS00039">
    <property type="entry name" value="DEAD_ATP_HELICASE"/>
    <property type="match status" value="1"/>
</dbReference>
<dbReference type="PROSITE" id="PS51192">
    <property type="entry name" value="HELICASE_ATP_BIND_1"/>
    <property type="match status" value="1"/>
</dbReference>
<dbReference type="PROSITE" id="PS51194">
    <property type="entry name" value="HELICASE_CTER"/>
    <property type="match status" value="1"/>
</dbReference>
<dbReference type="PROSITE" id="PS51195">
    <property type="entry name" value="Q_MOTIF"/>
    <property type="match status" value="1"/>
</dbReference>
<evidence type="ECO:0000250" key="1">
    <source>
        <dbReference type="UniProtKB" id="P38919"/>
    </source>
</evidence>
<evidence type="ECO:0000255" key="2">
    <source>
        <dbReference type="PROSITE-ProRule" id="PRU00541"/>
    </source>
</evidence>
<evidence type="ECO:0000255" key="3">
    <source>
        <dbReference type="PROSITE-ProRule" id="PRU00542"/>
    </source>
</evidence>
<evidence type="ECO:0000256" key="4">
    <source>
        <dbReference type="SAM" id="MobiDB-lite"/>
    </source>
</evidence>
<evidence type="ECO:0000269" key="5">
    <source>
    </source>
</evidence>
<evidence type="ECO:0000303" key="6">
    <source>
    </source>
</evidence>
<evidence type="ECO:0000305" key="7"/>
<evidence type="ECO:0000312" key="8">
    <source>
        <dbReference type="EMBL" id="AAK50586.1"/>
    </source>
</evidence>
<evidence type="ECO:0000312" key="9">
    <source>
        <dbReference type="EMBL" id="ABF97164.1"/>
    </source>
</evidence>
<evidence type="ECO:0000312" key="10">
    <source>
        <dbReference type="EMBL" id="BAS84961.1"/>
    </source>
</evidence>
<proteinExistence type="evidence at protein level"/>
<comment type="function">
    <text evidence="1 5">ATP-dependent RNA helicase. Core component of the splicing-dependent multiprotein exon junction complex (EJC) deposited at splice junctions on mRNAs. The EJC is a dynamic structure consisting of core proteins and several peripheral nuclear and cytoplasmic associated factors that join the complex only transiently either during EJC assembly or during subsequent mRNA metabolism. The EJC marks the position of the exon-exon junction in the mature mRNA for the gene expression machinery and the core components remain bound to spliced mRNAs throughout all stages of mRNA metabolism thereby influencing downstream processes including nuclear mRNA export, subcellular mRNA localization, translation efficiency and nonsense-mediated mRNA decay (NMD). Its RNA-dependent ATPase and RNA-helicase activities are induced by MLN51/CASC3, but abolished in presence of the MAGO-Y14 heterodimer, thereby trapping the ATP-bound EJC core onto spliced mRNA in a stable conformation. The inhibition of ATPase activity by the MAGO-Y14 heterodimer increases the RNA-binding affinity of the EJC (By similarity). EJC core proteins play essential roles in rice development, growth and reproduction. Regulates the splicing of UDT1 (UNDEVELOPED TAPETUM 1) pre-mRNA transcript. UDT1 is a key regulator in stamen development (PubMed:27071313).</text>
</comment>
<comment type="catalytic activity">
    <reaction evidence="7">
        <text>ATP + H2O = ADP + phosphate + H(+)</text>
        <dbReference type="Rhea" id="RHEA:13065"/>
        <dbReference type="ChEBI" id="CHEBI:15377"/>
        <dbReference type="ChEBI" id="CHEBI:15378"/>
        <dbReference type="ChEBI" id="CHEBI:30616"/>
        <dbReference type="ChEBI" id="CHEBI:43474"/>
        <dbReference type="ChEBI" id="CHEBI:456216"/>
        <dbReference type="EC" id="3.6.4.13"/>
    </reaction>
</comment>
<comment type="subunit">
    <text evidence="5">Interacts with MAGO1 and Y14B.</text>
</comment>
<comment type="subcellular location">
    <subcellularLocation>
        <location evidence="5">Nucleus</location>
    </subcellularLocation>
    <subcellularLocation>
        <location evidence="5">Cytoplasm</location>
    </subcellularLocation>
    <text evidence="1">Nucleocytoplasmic shuttling protein. Travels to the cytoplasm as part of the exon junction complex (EJC) bound to mRNA.</text>
</comment>
<comment type="tissue specificity">
    <text evidence="5">Expressed in leaves, flowers and seeds.</text>
</comment>
<comment type="domain">
    <text evidence="7">The Q motif is unique to and characteristic of the DEAD box family of RNA helicases and controls ATP binding and hydrolysis.</text>
</comment>
<comment type="similarity">
    <text evidence="7">Belongs to the DEAD box helicase family. DDX48/FAL1 subfamily.</text>
</comment>
<reference key="1">
    <citation type="journal article" date="2005" name="Genome Res.">
        <title>Sequence, annotation, and analysis of synteny between rice chromosome 3 and diverged grass species.</title>
        <authorList>
            <consortium name="The rice chromosome 3 sequencing consortium"/>
            <person name="Buell C.R."/>
            <person name="Yuan Q."/>
            <person name="Ouyang S."/>
            <person name="Liu J."/>
            <person name="Zhu W."/>
            <person name="Wang A."/>
            <person name="Maiti R."/>
            <person name="Haas B."/>
            <person name="Wortman J."/>
            <person name="Pertea M."/>
            <person name="Jones K.M."/>
            <person name="Kim M."/>
            <person name="Overton L."/>
            <person name="Tsitrin T."/>
            <person name="Fadrosh D."/>
            <person name="Bera J."/>
            <person name="Weaver B."/>
            <person name="Jin S."/>
            <person name="Johri S."/>
            <person name="Reardon M."/>
            <person name="Webb K."/>
            <person name="Hill J."/>
            <person name="Moffat K."/>
            <person name="Tallon L."/>
            <person name="Van Aken S."/>
            <person name="Lewis M."/>
            <person name="Utterback T."/>
            <person name="Feldblyum T."/>
            <person name="Zismann V."/>
            <person name="Iobst S."/>
            <person name="Hsiao J."/>
            <person name="de Vazeille A.R."/>
            <person name="Salzberg S.L."/>
            <person name="White O."/>
            <person name="Fraser C.M."/>
            <person name="Yu Y."/>
            <person name="Kim H."/>
            <person name="Rambo T."/>
            <person name="Currie J."/>
            <person name="Collura K."/>
            <person name="Kernodle-Thompson S."/>
            <person name="Wei F."/>
            <person name="Kudrna K."/>
            <person name="Ammiraju J.S.S."/>
            <person name="Luo M."/>
            <person name="Goicoechea J.L."/>
            <person name="Wing R.A."/>
            <person name="Henry D."/>
            <person name="Oates R."/>
            <person name="Palmer M."/>
            <person name="Pries G."/>
            <person name="Saski C."/>
            <person name="Simmons J."/>
            <person name="Soderlund C."/>
            <person name="Nelson W."/>
            <person name="de la Bastide M."/>
            <person name="Spiegel L."/>
            <person name="Nascimento L."/>
            <person name="Huang E."/>
            <person name="Preston R."/>
            <person name="Zutavern T."/>
            <person name="Palmer L."/>
            <person name="O'Shaughnessy A."/>
            <person name="Dike S."/>
            <person name="McCombie W.R."/>
            <person name="Minx P."/>
            <person name="Cordum H."/>
            <person name="Wilson R."/>
            <person name="Jin W."/>
            <person name="Lee H.R."/>
            <person name="Jiang J."/>
            <person name="Jackson S."/>
        </authorList>
    </citation>
    <scope>NUCLEOTIDE SEQUENCE [LARGE SCALE GENOMIC DNA]</scope>
    <source>
        <strain>cv. Nipponbare</strain>
    </source>
</reference>
<reference key="2">
    <citation type="journal article" date="2005" name="Nature">
        <title>The map-based sequence of the rice genome.</title>
        <authorList>
            <consortium name="International rice genome sequencing project (IRGSP)"/>
        </authorList>
    </citation>
    <scope>NUCLEOTIDE SEQUENCE [LARGE SCALE GENOMIC DNA]</scope>
    <source>
        <strain>cv. Nipponbare</strain>
    </source>
</reference>
<reference key="3">
    <citation type="journal article" date="2008" name="Nucleic Acids Res.">
        <title>The rice annotation project database (RAP-DB): 2008 update.</title>
        <authorList>
            <consortium name="The rice annotation project (RAP)"/>
        </authorList>
    </citation>
    <scope>GENOME REANNOTATION</scope>
    <source>
        <strain>cv. Nipponbare</strain>
    </source>
</reference>
<reference key="4">
    <citation type="journal article" date="2013" name="Rice">
        <title>Improvement of the Oryza sativa Nipponbare reference genome using next generation sequence and optical map data.</title>
        <authorList>
            <person name="Kawahara Y."/>
            <person name="de la Bastide M."/>
            <person name="Hamilton J.P."/>
            <person name="Kanamori H."/>
            <person name="McCombie W.R."/>
            <person name="Ouyang S."/>
            <person name="Schwartz D.C."/>
            <person name="Tanaka T."/>
            <person name="Wu J."/>
            <person name="Zhou S."/>
            <person name="Childs K.L."/>
            <person name="Davidson R.M."/>
            <person name="Lin H."/>
            <person name="Quesada-Ocampo L."/>
            <person name="Vaillancourt B."/>
            <person name="Sakai H."/>
            <person name="Lee S.S."/>
            <person name="Kim J."/>
            <person name="Numa H."/>
            <person name="Itoh T."/>
            <person name="Buell C.R."/>
            <person name="Matsumoto T."/>
        </authorList>
    </citation>
    <scope>GENOME REANNOTATION</scope>
    <source>
        <strain>cv. Nipponbare</strain>
    </source>
</reference>
<reference key="5">
    <citation type="journal article" date="2003" name="Science">
        <title>Collection, mapping, and annotation of over 28,000 cDNA clones from japonica rice.</title>
        <authorList>
            <consortium name="The rice full-length cDNA consortium"/>
        </authorList>
    </citation>
    <scope>NUCLEOTIDE SEQUENCE [LARGE SCALE MRNA]</scope>
    <source>
        <strain>cv. Nipponbare</strain>
    </source>
</reference>
<reference key="6">
    <citation type="journal article" date="2016" name="BMC Plant Biol.">
        <title>Two highly similar DEAD box proteins, OsRH2 and OsRH34, homologous to eukaryotic initiation factor 4AIII, play roles of the exon junction complex in regulating growth and development in rice.</title>
        <authorList>
            <person name="Huang C.K."/>
            <person name="Sie Y.S."/>
            <person name="Chen Y.F."/>
            <person name="Huang T.S."/>
            <person name="Lu C.A."/>
        </authorList>
    </citation>
    <scope>FUNCTION</scope>
    <scope>INTERACTION WITH MAGO1 AND Y14B</scope>
    <scope>SUBCELLULAR LOCATION</scope>
    <scope>TISSUE SPECIFICITY</scope>
</reference>
<accession>Q10I26</accession>
<accession>A0A0N7KHJ1</accession>
<accession>Q94LC7</accession>
<protein>
    <recommendedName>
        <fullName evidence="7">Eukaryotic initiation factor 4A-III homolog B</fullName>
        <shortName evidence="6">OseIF4AIIIb</shortName>
        <shortName evidence="7">eIF-4A-III</shortName>
        <shortName evidence="7">eIF4A-III</shortName>
        <ecNumber evidence="7">3.6.4.13</ecNumber>
    </recommendedName>
    <alternativeName>
        <fullName evidence="6">DEAD-box ATP-dependent RNA helicase 34</fullName>
        <shortName evidence="6">OsRH34</shortName>
    </alternativeName>
</protein>
<organism>
    <name type="scientific">Oryza sativa subsp. japonica</name>
    <name type="common">Rice</name>
    <dbReference type="NCBI Taxonomy" id="39947"/>
    <lineage>
        <taxon>Eukaryota</taxon>
        <taxon>Viridiplantae</taxon>
        <taxon>Streptophyta</taxon>
        <taxon>Embryophyta</taxon>
        <taxon>Tracheophyta</taxon>
        <taxon>Spermatophyta</taxon>
        <taxon>Magnoliopsida</taxon>
        <taxon>Liliopsida</taxon>
        <taxon>Poales</taxon>
        <taxon>Poaceae</taxon>
        <taxon>BOP clade</taxon>
        <taxon>Oryzoideae</taxon>
        <taxon>Oryzeae</taxon>
        <taxon>Oryzinae</taxon>
        <taxon>Oryza</taxon>
        <taxon>Oryza sativa</taxon>
    </lineage>
</organism>
<feature type="chain" id="PRO_0000282443" description="Eukaryotic initiation factor 4A-III homolog B">
    <location>
        <begin position="1"/>
        <end position="404"/>
    </location>
</feature>
<feature type="domain" description="Helicase ATP-binding" evidence="2">
    <location>
        <begin position="62"/>
        <end position="232"/>
    </location>
</feature>
<feature type="domain" description="Helicase C-terminal" evidence="3">
    <location>
        <begin position="243"/>
        <end position="404"/>
    </location>
</feature>
<feature type="region of interest" description="Disordered" evidence="4">
    <location>
        <begin position="1"/>
        <end position="21"/>
    </location>
</feature>
<feature type="short sequence motif" description="Q motif">
    <location>
        <begin position="31"/>
        <end position="59"/>
    </location>
</feature>
<feature type="short sequence motif" description="DEAD box">
    <location>
        <begin position="180"/>
        <end position="183"/>
    </location>
</feature>
<feature type="binding site" evidence="2">
    <location>
        <begin position="75"/>
        <end position="82"/>
    </location>
    <ligand>
        <name>ATP</name>
        <dbReference type="ChEBI" id="CHEBI:30616"/>
    </ligand>
</feature>
<feature type="sequence conflict" description="In Ref. 5; AK103270." evidence="7" ref="5">
    <original>S</original>
    <variation>C</variation>
    <location>
        <position position="318"/>
    </location>
</feature>
<name>IF43B_ORYSJ</name>
<sequence>MAAATTSRRGPGAMDDENLTFETSPGVEVISSFDQMGIREDLLRGIYAYGFEKPSAIQQRAVLPIISGRDVIAQAQSGTGKTSMISLSVCQIVDTAVREVQALILSPTRELAAQTERVMLAIGDYINIQVHACIGGKSIGEDIRKLEHGVHVVSGTPGRVCDMIKRRTLRTRAIKLLILDEADEMLGRGFKDQIYDVYRYLPPELQVCLISATLPHEILEMTSKFMTDPVRILVKRDELTLEGIKQFFVAVEKEEWKFDTLCDLYDTLTITQAVIFCNTKRKVDWLTERMRSNNFTVSAMHGDMPQKERDAIMGEFRSGATRVLITTDVWARGLDVQQVSLVINYDLPNNRELYIHRIGRSGRFGRKGVAINFVKKEDIRILRDIEQYYSTQIDEMPMNVADLI</sequence>
<keyword id="KW-0067">ATP-binding</keyword>
<keyword id="KW-0963">Cytoplasm</keyword>
<keyword id="KW-0347">Helicase</keyword>
<keyword id="KW-0378">Hydrolase</keyword>
<keyword id="KW-0507">mRNA processing</keyword>
<keyword id="KW-0508">mRNA splicing</keyword>
<keyword id="KW-0509">mRNA transport</keyword>
<keyword id="KW-0866">Nonsense-mediated mRNA decay</keyword>
<keyword id="KW-0547">Nucleotide-binding</keyword>
<keyword id="KW-0539">Nucleus</keyword>
<keyword id="KW-1185">Reference proteome</keyword>
<keyword id="KW-0694">RNA-binding</keyword>
<keyword id="KW-0810">Translation regulation</keyword>
<keyword id="KW-0813">Transport</keyword>